<sequence>MTESEFLKQAEATLDQIEATLEELANTSDLDVECTRSGNVLEIEFIDNGTKIIVNSQAPMQELWVAAKSGGFHFKAQGEQWMNTRDATELFAALSQMVSQQGGVEVVLRDAG</sequence>
<organism>
    <name type="scientific">Herminiimonas arsenicoxydans</name>
    <dbReference type="NCBI Taxonomy" id="204773"/>
    <lineage>
        <taxon>Bacteria</taxon>
        <taxon>Pseudomonadati</taxon>
        <taxon>Pseudomonadota</taxon>
        <taxon>Betaproteobacteria</taxon>
        <taxon>Burkholderiales</taxon>
        <taxon>Oxalobacteraceae</taxon>
        <taxon>Herminiimonas</taxon>
    </lineage>
</organism>
<feature type="chain" id="PRO_1000076544" description="Iron-sulfur cluster assembly protein CyaY">
    <location>
        <begin position="1"/>
        <end position="112"/>
    </location>
</feature>
<name>CYAY_HERAR</name>
<keyword id="KW-0408">Iron</keyword>
<keyword id="KW-0479">Metal-binding</keyword>
<keyword id="KW-1185">Reference proteome</keyword>
<comment type="function">
    <text evidence="1">Involved in iron-sulfur (Fe-S) cluster assembly. May act as a regulator of Fe-S biogenesis.</text>
</comment>
<comment type="similarity">
    <text evidence="1">Belongs to the frataxin family.</text>
</comment>
<gene>
    <name evidence="1" type="primary">cyaY</name>
    <name type="ordered locus">HEAR3127</name>
</gene>
<protein>
    <recommendedName>
        <fullName evidence="1">Iron-sulfur cluster assembly protein CyaY</fullName>
    </recommendedName>
</protein>
<reference key="1">
    <citation type="journal article" date="2007" name="PLoS Genet.">
        <title>A tale of two oxidation states: bacterial colonization of arsenic-rich environments.</title>
        <authorList>
            <person name="Muller D."/>
            <person name="Medigue C."/>
            <person name="Koechler S."/>
            <person name="Barbe V."/>
            <person name="Barakat M."/>
            <person name="Talla E."/>
            <person name="Bonnefoy V."/>
            <person name="Krin E."/>
            <person name="Arsene-Ploetze F."/>
            <person name="Carapito C."/>
            <person name="Chandler M."/>
            <person name="Cournoyer B."/>
            <person name="Cruveiller S."/>
            <person name="Dossat C."/>
            <person name="Duval S."/>
            <person name="Heymann M."/>
            <person name="Leize E."/>
            <person name="Lieutaud A."/>
            <person name="Lievremont D."/>
            <person name="Makita Y."/>
            <person name="Mangenot S."/>
            <person name="Nitschke W."/>
            <person name="Ortet P."/>
            <person name="Perdrial N."/>
            <person name="Schoepp B."/>
            <person name="Siguier P."/>
            <person name="Simeonova D.D."/>
            <person name="Rouy Z."/>
            <person name="Segurens B."/>
            <person name="Turlin E."/>
            <person name="Vallenet D."/>
            <person name="van Dorsselaer A."/>
            <person name="Weiss S."/>
            <person name="Weissenbach J."/>
            <person name="Lett M.-C."/>
            <person name="Danchin A."/>
            <person name="Bertin P.N."/>
        </authorList>
    </citation>
    <scope>NUCLEOTIDE SEQUENCE [LARGE SCALE GENOMIC DNA]</scope>
    <source>
        <strain>ULPAs1</strain>
    </source>
</reference>
<dbReference type="EMBL" id="CU207211">
    <property type="protein sequence ID" value="CAL63236.1"/>
    <property type="molecule type" value="Genomic_DNA"/>
</dbReference>
<dbReference type="SMR" id="A4G9P9"/>
<dbReference type="STRING" id="204773.HEAR3127"/>
<dbReference type="KEGG" id="har:HEAR3127"/>
<dbReference type="eggNOG" id="COG1965">
    <property type="taxonomic scope" value="Bacteria"/>
</dbReference>
<dbReference type="HOGENOM" id="CLU_080880_3_0_4"/>
<dbReference type="OrthoDB" id="285675at2"/>
<dbReference type="Proteomes" id="UP000006697">
    <property type="component" value="Chromosome"/>
</dbReference>
<dbReference type="GO" id="GO:0005737">
    <property type="term" value="C:cytoplasm"/>
    <property type="evidence" value="ECO:0007669"/>
    <property type="project" value="UniProtKB-ARBA"/>
</dbReference>
<dbReference type="GO" id="GO:0008199">
    <property type="term" value="F:ferric iron binding"/>
    <property type="evidence" value="ECO:0007669"/>
    <property type="project" value="InterPro"/>
</dbReference>
<dbReference type="GO" id="GO:0016226">
    <property type="term" value="P:iron-sulfur cluster assembly"/>
    <property type="evidence" value="ECO:0007669"/>
    <property type="project" value="UniProtKB-UniRule"/>
</dbReference>
<dbReference type="Gene3D" id="3.30.920.10">
    <property type="entry name" value="Frataxin/CyaY"/>
    <property type="match status" value="1"/>
</dbReference>
<dbReference type="HAMAP" id="MF_00142">
    <property type="entry name" value="CyaY"/>
    <property type="match status" value="1"/>
</dbReference>
<dbReference type="InterPro" id="IPR047584">
    <property type="entry name" value="CyaY"/>
</dbReference>
<dbReference type="InterPro" id="IPR002908">
    <property type="entry name" value="Frataxin/CyaY"/>
</dbReference>
<dbReference type="InterPro" id="IPR036524">
    <property type="entry name" value="Frataxin/CyaY_sf"/>
</dbReference>
<dbReference type="InterPro" id="IPR020895">
    <property type="entry name" value="Frataxin_CS"/>
</dbReference>
<dbReference type="NCBIfam" id="TIGR03421">
    <property type="entry name" value="FeS_CyaY"/>
    <property type="match status" value="1"/>
</dbReference>
<dbReference type="PANTHER" id="PTHR16821">
    <property type="entry name" value="FRATAXIN"/>
    <property type="match status" value="1"/>
</dbReference>
<dbReference type="PANTHER" id="PTHR16821:SF2">
    <property type="entry name" value="FRATAXIN, MITOCHONDRIAL"/>
    <property type="match status" value="1"/>
</dbReference>
<dbReference type="Pfam" id="PF01491">
    <property type="entry name" value="Frataxin_Cyay"/>
    <property type="match status" value="1"/>
</dbReference>
<dbReference type="SMART" id="SM01219">
    <property type="entry name" value="Frataxin_Cyay"/>
    <property type="match status" value="1"/>
</dbReference>
<dbReference type="SUPFAM" id="SSF55387">
    <property type="entry name" value="Frataxin/Nqo15-like"/>
    <property type="match status" value="1"/>
</dbReference>
<dbReference type="PROSITE" id="PS01344">
    <property type="entry name" value="FRATAXIN_1"/>
    <property type="match status" value="1"/>
</dbReference>
<dbReference type="PROSITE" id="PS50810">
    <property type="entry name" value="FRATAXIN_2"/>
    <property type="match status" value="1"/>
</dbReference>
<accession>A4G9P9</accession>
<evidence type="ECO:0000255" key="1">
    <source>
        <dbReference type="HAMAP-Rule" id="MF_00142"/>
    </source>
</evidence>
<proteinExistence type="inferred from homology"/>